<name>PORB_HORVU</name>
<sequence>MALQAATSFLPSALSARKEGAAKDSAFFGVRLADGLKLDATSLGLRTKRVNTSSVAIRAQAAAVSAPTATPASPAGKKTVRTGNAIITGASSGLGLATAKALAESGKWHVIMACRDYLKTARAARAAGMPKGSYTIVHLDLASLDSVRQFVKNVRQLDMPIDVVVCNAAVYQPTAKEPSFTADGFEMSVGVNHLGHFLLARELLEDLKASDYPSKRLIIVGSITGNTNTLAGNVPPKANLGDLRGLAAGLNGVGSAAMIDGAEFDGAKAYKDSKVCNMLTMQEFHRRYHEETGVTFASLYPGCIATTGLFREHIPLFRLLFPPFQKYITKGYVSEEEAGKRLAQVVSEPSLTKSGVYWSWNKNSASFENQLSEEASDTEKARKVWELSEKLVGLA</sequence>
<organism>
    <name type="scientific">Hordeum vulgare</name>
    <name type="common">Barley</name>
    <dbReference type="NCBI Taxonomy" id="4513"/>
    <lineage>
        <taxon>Eukaryota</taxon>
        <taxon>Viridiplantae</taxon>
        <taxon>Streptophyta</taxon>
        <taxon>Embryophyta</taxon>
        <taxon>Tracheophyta</taxon>
        <taxon>Spermatophyta</taxon>
        <taxon>Magnoliopsida</taxon>
        <taxon>Liliopsida</taxon>
        <taxon>Poales</taxon>
        <taxon>Poaceae</taxon>
        <taxon>BOP clade</taxon>
        <taxon>Pooideae</taxon>
        <taxon>Triticodae</taxon>
        <taxon>Triticeae</taxon>
        <taxon>Hordeinae</taxon>
        <taxon>Hordeum</taxon>
    </lineage>
</organism>
<protein>
    <recommendedName>
        <fullName>Protochlorophyllide reductase B, chloroplastic</fullName>
        <shortName>PCR B</shortName>
        <ecNumber>1.3.1.33</ecNumber>
    </recommendedName>
    <alternativeName>
        <fullName>NADPH-protochlorophyllide oxidoreductase B</fullName>
        <shortName>POR B</shortName>
    </alternativeName>
</protein>
<keyword id="KW-0149">Chlorophyll biosynthesis</keyword>
<keyword id="KW-0150">Chloroplast</keyword>
<keyword id="KW-0521">NADP</keyword>
<keyword id="KW-0560">Oxidoreductase</keyword>
<keyword id="KW-0602">Photosynthesis</keyword>
<keyword id="KW-0934">Plastid</keyword>
<keyword id="KW-0809">Transit peptide</keyword>
<reference key="1">
    <citation type="journal article" date="1995" name="Proc. Natl. Acad. Sci. U.S.A.">
        <title>Two routes of chlorophyllide synthesis that are differentially regulated by light in barley (Hordeum vulgare L.).</title>
        <authorList>
            <person name="Holtorf H."/>
            <person name="Reinbothe S."/>
            <person name="Reinbothe C."/>
            <person name="Bereza B."/>
            <person name="Apel K."/>
        </authorList>
    </citation>
    <scope>NUCLEOTIDE SEQUENCE [MRNA]</scope>
</reference>
<comment type="function">
    <text>Phototransformation of protochlorophyllide (Pchlide) to chlorophyllide (Chlide).</text>
</comment>
<comment type="catalytic activity">
    <reaction>
        <text>chlorophyllide a + NADP(+) = protochlorophyllide a + NADPH + H(+)</text>
        <dbReference type="Rhea" id="RHEA:11132"/>
        <dbReference type="ChEBI" id="CHEBI:15378"/>
        <dbReference type="ChEBI" id="CHEBI:57783"/>
        <dbReference type="ChEBI" id="CHEBI:58349"/>
        <dbReference type="ChEBI" id="CHEBI:83348"/>
        <dbReference type="ChEBI" id="CHEBI:83350"/>
        <dbReference type="EC" id="1.3.1.33"/>
    </reaction>
</comment>
<comment type="pathway">
    <text>Porphyrin-containing compound metabolism; chlorophyll biosynthesis.</text>
</comment>
<comment type="interaction">
    <interactant intactId="EBI-15724755">
        <id>Q42850</id>
    </interactant>
    <interactant intactId="EBI-15724741">
        <id>P13653</id>
        <label>PORA</label>
    </interactant>
    <organismsDiffer>false</organismsDiffer>
    <experiments>2</experiments>
</comment>
<comment type="subcellular location">
    <subcellularLocation>
        <location>Plastid</location>
        <location>Chloroplast</location>
    </subcellularLocation>
</comment>
<comment type="similarity">
    <text evidence="2">Belongs to the short-chain dehydrogenases/reductases (SDR) family. POR subfamily.</text>
</comment>
<accession>Q42850</accession>
<dbReference type="EC" id="1.3.1.33"/>
<dbReference type="EMBL" id="X84738">
    <property type="protein sequence ID" value="CAA59228.1"/>
    <property type="molecule type" value="mRNA"/>
</dbReference>
<dbReference type="PIR" id="S52285">
    <property type="entry name" value="S52285"/>
</dbReference>
<dbReference type="SMR" id="Q42850"/>
<dbReference type="DIP" id="DIP-46279N"/>
<dbReference type="IntAct" id="Q42850">
    <property type="interactions" value="1"/>
</dbReference>
<dbReference type="BRENDA" id="1.3.1.33">
    <property type="organism ID" value="2687"/>
</dbReference>
<dbReference type="UniPathway" id="UPA00668"/>
<dbReference type="ExpressionAtlas" id="Q42850">
    <property type="expression patterns" value="baseline and differential"/>
</dbReference>
<dbReference type="GO" id="GO:0009507">
    <property type="term" value="C:chloroplast"/>
    <property type="evidence" value="ECO:0007669"/>
    <property type="project" value="UniProtKB-SubCell"/>
</dbReference>
<dbReference type="GO" id="GO:0016630">
    <property type="term" value="F:protochlorophyllide reductase activity"/>
    <property type="evidence" value="ECO:0007669"/>
    <property type="project" value="UniProtKB-EC"/>
</dbReference>
<dbReference type="GO" id="GO:0015995">
    <property type="term" value="P:chlorophyll biosynthetic process"/>
    <property type="evidence" value="ECO:0007669"/>
    <property type="project" value="UniProtKB-UniPathway"/>
</dbReference>
<dbReference type="GO" id="GO:0015979">
    <property type="term" value="P:photosynthesis"/>
    <property type="evidence" value="ECO:0007669"/>
    <property type="project" value="UniProtKB-KW"/>
</dbReference>
<dbReference type="CDD" id="cd09810">
    <property type="entry name" value="LPOR_like_SDR_c_like"/>
    <property type="match status" value="1"/>
</dbReference>
<dbReference type="Gene3D" id="3.40.50.720">
    <property type="entry name" value="NAD(P)-binding Rossmann-like Domain"/>
    <property type="match status" value="1"/>
</dbReference>
<dbReference type="InterPro" id="IPR036291">
    <property type="entry name" value="NAD(P)-bd_dom_sf"/>
</dbReference>
<dbReference type="InterPro" id="IPR005979">
    <property type="entry name" value="Prochl_reduct"/>
</dbReference>
<dbReference type="InterPro" id="IPR002347">
    <property type="entry name" value="SDR_fam"/>
</dbReference>
<dbReference type="NCBIfam" id="TIGR01289">
    <property type="entry name" value="LPOR"/>
    <property type="match status" value="1"/>
</dbReference>
<dbReference type="PANTHER" id="PTHR44419">
    <property type="entry name" value="PROTOCHLOROPHYLLIDE REDUCTASE C, CHLOROPLASTIC"/>
    <property type="match status" value="1"/>
</dbReference>
<dbReference type="PANTHER" id="PTHR44419:SF20">
    <property type="entry name" value="PROTOCHLOROPHYLLIDE REDUCTASE C, CHLOROPLASTIC"/>
    <property type="match status" value="1"/>
</dbReference>
<dbReference type="Pfam" id="PF00106">
    <property type="entry name" value="adh_short"/>
    <property type="match status" value="1"/>
</dbReference>
<dbReference type="PRINTS" id="PR00081">
    <property type="entry name" value="GDHRDH"/>
</dbReference>
<dbReference type="SUPFAM" id="SSF51735">
    <property type="entry name" value="NAD(P)-binding Rossmann-fold domains"/>
    <property type="match status" value="1"/>
</dbReference>
<evidence type="ECO:0000255" key="1"/>
<evidence type="ECO:0000305" key="2"/>
<proteinExistence type="evidence at protein level"/>
<feature type="transit peptide" description="Chloroplast" evidence="1">
    <location>
        <begin position="1"/>
        <end position="59"/>
    </location>
</feature>
<feature type="chain" id="PRO_0000023294" description="Protochlorophyllide reductase B, chloroplastic">
    <location>
        <begin position="60"/>
        <end position="395"/>
    </location>
</feature>
<gene>
    <name type="primary">PORB</name>
</gene>